<protein>
    <recommendedName>
        <fullName evidence="1">UPF0398 protein Sez_1569</fullName>
    </recommendedName>
</protein>
<reference key="1">
    <citation type="journal article" date="2008" name="PLoS ONE">
        <title>Genome sequence of a lancefield group C Streptococcus zooepidemicus strain causing epidemic nephritis: new information about an old disease.</title>
        <authorList>
            <person name="Beres S.B."/>
            <person name="Sesso R."/>
            <person name="Pinto S.W.L."/>
            <person name="Hoe N.P."/>
            <person name="Porcella S.F."/>
            <person name="Deleo F.R."/>
            <person name="Musser J.M."/>
        </authorList>
    </citation>
    <scope>NUCLEOTIDE SEQUENCE [LARGE SCALE GENOMIC DNA]</scope>
    <source>
        <strain>MGCS10565</strain>
    </source>
</reference>
<name>Y1569_STREM</name>
<gene>
    <name type="ordered locus">Sez_1569</name>
</gene>
<accession>B4U4I5</accession>
<evidence type="ECO:0000255" key="1">
    <source>
        <dbReference type="HAMAP-Rule" id="MF_01575"/>
    </source>
</evidence>
<dbReference type="EMBL" id="CP001129">
    <property type="protein sequence ID" value="ACG62902.1"/>
    <property type="molecule type" value="Genomic_DNA"/>
</dbReference>
<dbReference type="RefSeq" id="WP_012516158.1">
    <property type="nucleotide sequence ID" value="NC_011134.1"/>
</dbReference>
<dbReference type="SMR" id="B4U4I5"/>
<dbReference type="KEGG" id="sez:Sez_1569"/>
<dbReference type="HOGENOM" id="CLU_105319_0_0_9"/>
<dbReference type="Proteomes" id="UP000001873">
    <property type="component" value="Chromosome"/>
</dbReference>
<dbReference type="Gene3D" id="3.40.50.450">
    <property type="match status" value="1"/>
</dbReference>
<dbReference type="HAMAP" id="MF_01575">
    <property type="entry name" value="UPF0398"/>
    <property type="match status" value="1"/>
</dbReference>
<dbReference type="InterPro" id="IPR010697">
    <property type="entry name" value="YspA"/>
</dbReference>
<dbReference type="NCBIfam" id="NF010181">
    <property type="entry name" value="PRK13660.1"/>
    <property type="match status" value="1"/>
</dbReference>
<dbReference type="PANTHER" id="PTHR38440:SF1">
    <property type="entry name" value="UPF0398 PROTEIN SPR0331"/>
    <property type="match status" value="1"/>
</dbReference>
<dbReference type="PANTHER" id="PTHR38440">
    <property type="entry name" value="UPF0398 PROTEIN YPSA"/>
    <property type="match status" value="1"/>
</dbReference>
<dbReference type="Pfam" id="PF06908">
    <property type="entry name" value="YpsA"/>
    <property type="match status" value="1"/>
</dbReference>
<dbReference type="PIRSF" id="PIRSF021290">
    <property type="entry name" value="DUF1273"/>
    <property type="match status" value="1"/>
</dbReference>
<dbReference type="SUPFAM" id="SSF102405">
    <property type="entry name" value="MCP/YpsA-like"/>
    <property type="match status" value="1"/>
</dbReference>
<sequence length="171" mass="20072">MTAILVTGYRSFELGIFSEKDKRVAIIKKAIKRDLIAYLEEGVDWFIFTGNLGFEQWALEVANDLKKTYPLKTATIFAFETHGSTWNDRNQQHLQQFRATDFVKYSYPSYESPKQLKSYHHFLIHNTDGAYLFYDSEHETRLSYLVAAMKEQPCYPLSFLNFERLNDIADE</sequence>
<proteinExistence type="inferred from homology"/>
<feature type="chain" id="PRO_1000200771" description="UPF0398 protein Sez_1569">
    <location>
        <begin position="1"/>
        <end position="171"/>
    </location>
</feature>
<organism>
    <name type="scientific">Streptococcus equi subsp. zooepidemicus (strain MGCS10565)</name>
    <dbReference type="NCBI Taxonomy" id="552526"/>
    <lineage>
        <taxon>Bacteria</taxon>
        <taxon>Bacillati</taxon>
        <taxon>Bacillota</taxon>
        <taxon>Bacilli</taxon>
        <taxon>Lactobacillales</taxon>
        <taxon>Streptococcaceae</taxon>
        <taxon>Streptococcus</taxon>
    </lineage>
</organism>
<comment type="similarity">
    <text evidence="1">Belongs to the UPF0398 family.</text>
</comment>